<gene>
    <name type="primary">25</name>
</gene>
<evidence type="ECO:0000269" key="1">
    <source>
    </source>
</evidence>
<evidence type="ECO:0000269" key="2">
    <source>
    </source>
</evidence>
<evidence type="ECO:0000269" key="3">
    <source>
    </source>
</evidence>
<evidence type="ECO:0000269" key="4">
    <source>
    </source>
</evidence>
<evidence type="ECO:0000269" key="5">
    <source>
    </source>
</evidence>
<evidence type="ECO:0000269" key="6">
    <source>
    </source>
</evidence>
<evidence type="ECO:0000303" key="7">
    <source>
    </source>
</evidence>
<evidence type="ECO:0000305" key="8"/>
<evidence type="ECO:0007829" key="9">
    <source>
        <dbReference type="PDB" id="5IW9"/>
    </source>
</evidence>
<comment type="function">
    <text evidence="1 5">Baseplate protein that is located next to the tail tube (inner baseplate). Involved in sheath assembly. The gp25-(gp6)2-gp7 module is involved in sheath contraction (PubMed:27193680).</text>
</comment>
<comment type="subunit">
    <text evidence="3 4 5">Homodimer. Interacts with gp53 and with the (gp6)2-gp7 heterotrimeric molecule; The gp25-(gp6)2-gp7 module is involved in sheath contraction (PubMed:27193680). Part of the baseplate macromolecular complex which consists of gp5, gp5.4, gp27 (central spike complex); gp6, gp25, gp53 (inner baseplate); gp7, gp8 (intermediate baseplate); gp9, gp10, gp11, gp12 (peripheral); gp48 and gp54 (proximal region of the tail tube).</text>
</comment>
<comment type="subcellular location">
    <subcellularLocation>
        <location evidence="1 2 4 5">Virion</location>
    </subcellularLocation>
    <text evidence="7">Present in 6 copies in the baseplate.</text>
</comment>
<comment type="induction">
    <text evidence="6">Expressed in the late phase of the viral replicative cycle.</text>
</comment>
<comment type="similarity">
    <text evidence="8">Belongs to the GpW/Gp25 family.</text>
</comment>
<proteinExistence type="evidence at protein level"/>
<organism>
    <name type="scientific">Enterobacteria phage T4</name>
    <name type="common">Bacteriophage T4</name>
    <dbReference type="NCBI Taxonomy" id="10665"/>
    <lineage>
        <taxon>Viruses</taxon>
        <taxon>Duplodnaviria</taxon>
        <taxon>Heunggongvirae</taxon>
        <taxon>Uroviricota</taxon>
        <taxon>Caudoviricetes</taxon>
        <taxon>Straboviridae</taxon>
        <taxon>Tevenvirinae</taxon>
        <taxon>Tequatrovirus</taxon>
    </lineage>
</organism>
<protein>
    <recommendedName>
        <fullName evidence="8">Baseplate wedge protein gp25</fullName>
    </recommendedName>
    <alternativeName>
        <fullName>Outer wedge of baseplate protein</fullName>
    </alternativeName>
    <alternativeName>
        <fullName>Protein Gp25</fullName>
    </alternativeName>
</protein>
<feature type="initiator methionine" description="Removed" evidence="2">
    <location>
        <position position="1"/>
    </location>
</feature>
<feature type="chain" id="PRO_0000165013" description="Baseplate wedge protein gp25">
    <location>
        <begin position="2"/>
        <end position="132"/>
    </location>
</feature>
<feature type="helix" evidence="9">
    <location>
        <begin position="21"/>
        <end position="41"/>
    </location>
</feature>
<feature type="helix" evidence="9">
    <location>
        <begin position="59"/>
        <end position="63"/>
    </location>
</feature>
<feature type="helix" evidence="9">
    <location>
        <begin position="69"/>
        <end position="84"/>
    </location>
</feature>
<feature type="strand" evidence="9">
    <location>
        <begin position="88"/>
        <end position="98"/>
    </location>
</feature>
<feature type="turn" evidence="9">
    <location>
        <begin position="99"/>
        <end position="102"/>
    </location>
</feature>
<feature type="strand" evidence="9">
    <location>
        <begin position="103"/>
        <end position="114"/>
    </location>
</feature>
<feature type="strand" evidence="9">
    <location>
        <begin position="120"/>
        <end position="126"/>
    </location>
</feature>
<dbReference type="EMBL" id="X05134">
    <property type="protein sequence ID" value="CAA28777.1"/>
    <property type="molecule type" value="Genomic_DNA"/>
</dbReference>
<dbReference type="EMBL" id="M77695">
    <property type="protein sequence ID" value="AAA32549.1"/>
    <property type="molecule type" value="Genomic_DNA"/>
</dbReference>
<dbReference type="EMBL" id="AF158101">
    <property type="protein sequence ID" value="AAD42433.1"/>
    <property type="molecule type" value="Genomic_DNA"/>
</dbReference>
<dbReference type="EMBL" id="X04856">
    <property type="protein sequence ID" value="CAA28547.1"/>
    <property type="molecule type" value="Genomic_DNA"/>
</dbReference>
<dbReference type="PIR" id="JF0054">
    <property type="entry name" value="GYBPT4"/>
</dbReference>
<dbReference type="RefSeq" id="NP_049800.1">
    <property type="nucleotide sequence ID" value="NC_000866.4"/>
</dbReference>
<dbReference type="PDB" id="5IV5">
    <property type="method" value="EM"/>
    <property type="resolution" value="4.11 A"/>
    <property type="chains" value="BD/DG/FJ/IC/T/q=1-132"/>
</dbReference>
<dbReference type="PDB" id="5IV7">
    <property type="method" value="EM"/>
    <property type="resolution" value="6.77 A"/>
    <property type="chains" value="BD/DF/GA/O/e/u=1-132"/>
</dbReference>
<dbReference type="PDB" id="5IW9">
    <property type="method" value="X-ray"/>
    <property type="resolution" value="2.47 A"/>
    <property type="chains" value="A/B=2-132"/>
</dbReference>
<dbReference type="PDBsum" id="5IV5"/>
<dbReference type="PDBsum" id="5IV7"/>
<dbReference type="PDBsum" id="5IW9"/>
<dbReference type="SMR" id="P09425"/>
<dbReference type="TCDB" id="1.K.1.1.1">
    <property type="family name" value="the gp27/5 t4-baseplate (t4-bp) family"/>
</dbReference>
<dbReference type="GeneID" id="1258633"/>
<dbReference type="KEGG" id="vg:1258633"/>
<dbReference type="OrthoDB" id="13602at10239"/>
<dbReference type="Proteomes" id="UP000009087">
    <property type="component" value="Segment"/>
</dbReference>
<dbReference type="GO" id="GO:0098025">
    <property type="term" value="C:virus tail, baseplate"/>
    <property type="evidence" value="ECO:0000314"/>
    <property type="project" value="UniProtKB"/>
</dbReference>
<dbReference type="Gene3D" id="3.10.450.40">
    <property type="match status" value="1"/>
</dbReference>
<dbReference type="InterPro" id="IPR007048">
    <property type="entry name" value="IraD/Gp25-like"/>
</dbReference>
<dbReference type="Pfam" id="PF04965">
    <property type="entry name" value="GPW_gp25"/>
    <property type="match status" value="1"/>
</dbReference>
<dbReference type="SUPFAM" id="SSF160719">
    <property type="entry name" value="gpW/gp25-like"/>
    <property type="match status" value="1"/>
</dbReference>
<keyword id="KW-0002">3D-structure</keyword>
<keyword id="KW-0903">Direct protein sequencing</keyword>
<keyword id="KW-0426">Late protein</keyword>
<keyword id="KW-1185">Reference proteome</keyword>
<keyword id="KW-1226">Viral baseplate protein</keyword>
<keyword id="KW-1227">Viral tail protein</keyword>
<keyword id="KW-0946">Virion</keyword>
<name>BP25_BPT4</name>
<accession>P09425</accession>
<organismHost>
    <name type="scientific">Escherichia coli</name>
    <dbReference type="NCBI Taxonomy" id="562"/>
</organismHost>
<reference key="1">
    <citation type="journal article" date="1988" name="Nucleic Acids Res.">
        <title>Bacteriophage T4 gene 25.</title>
        <authorList>
            <person name="Gruidl M.E."/>
            <person name="Canan N."/>
            <person name="Mosig G."/>
        </authorList>
    </citation>
    <scope>NUCLEOTIDE SEQUENCE [GENOMIC DNA]</scope>
    <scope>INDUCTION</scope>
    <source>
        <strain>D</strain>
    </source>
</reference>
<reference key="2">
    <citation type="journal article" date="1991" name="Virology">
        <title>Two bacteriophage T4 base plate genes (25 and 26) and the DNA repair gene uvsY belong to spatially and temporally overlapping transcription units.</title>
        <authorList>
            <person name="Gruidl M.E."/>
            <person name="Chen T.C."/>
            <person name="Gargano S."/>
            <person name="Storlazzi A."/>
            <person name="Cascino A."/>
            <person name="Mosig G."/>
        </authorList>
    </citation>
    <scope>NUCLEOTIDE SEQUENCE [GENOMIC DNA]</scope>
</reference>
<reference key="3">
    <citation type="journal article" date="2003" name="Microbiol. Mol. Biol. Rev.">
        <title>Bacteriophage T4 genome.</title>
        <authorList>
            <person name="Miller E.S."/>
            <person name="Kutter E."/>
            <person name="Mosig G."/>
            <person name="Arisaka F."/>
            <person name="Kunisawa T."/>
            <person name="Ruger W."/>
        </authorList>
    </citation>
    <scope>NUCLEOTIDE SEQUENCE [LARGE SCALE GENOMIC DNA]</scope>
</reference>
<reference key="4">
    <citation type="journal article" date="1986" name="Genetics">
        <title>Sequence and transcripts of the bacteriophage T4 DNA repair gene uvsY.</title>
        <authorList>
            <person name="Gruidl M.E."/>
            <person name="Mosig G."/>
        </authorList>
    </citation>
    <scope>NUCLEOTIDE SEQUENCE [GENOMIC DNA] OF 6-132</scope>
</reference>
<reference key="5">
    <citation type="journal article" date="2004" name="J. Bacteriol.">
        <title>Processing of the tail lysozyme (gp5) of bacteriophage T4.</title>
        <authorList>
            <person name="Ye N."/>
            <person name="Nemoto N."/>
        </authorList>
    </citation>
    <scope>PROTEIN SEQUENCE OF 2-11</scope>
    <scope>SUBCELLULAR LOCATION</scope>
</reference>
<reference key="6">
    <citation type="journal article" date="1990" name="J. Virol.">
        <title>Structure of the bacteriophage T4 baseplate as determined by chemical cross-linking.</title>
        <authorList>
            <person name="Watts N.R."/>
            <person name="Coombs D.H."/>
        </authorList>
    </citation>
    <scope>SUBCELLULAR LOCATION</scope>
    <scope>SUBUNIT</scope>
</reference>
<reference key="7">
    <citation type="journal article" date="2003" name="Cell. Mol. Life Sci.">
        <title>Structure and morphogenesis of bacteriophage T4.</title>
        <authorList>
            <person name="Leiman P.G."/>
            <person name="Kanamaru S."/>
            <person name="Mesyanzhinov V.V."/>
            <person name="Arisaka F."/>
            <person name="Rossmann M.G."/>
        </authorList>
    </citation>
    <scope>REVIEW</scope>
</reference>
<reference key="8">
    <citation type="journal article" date="2010" name="Virol. J.">
        <title>Morphogenesis of the T4 tail and tail fibers.</title>
        <authorList>
            <person name="Leiman P.G."/>
            <person name="Arisaka F."/>
            <person name="van Raaij M.J."/>
            <person name="Kostyuchenko V.A."/>
            <person name="Aksyuk A.A."/>
            <person name="Kanamaru S."/>
            <person name="Rossmann M.G."/>
        </authorList>
    </citation>
    <scope>REVIEW ON FUNCTION</scope>
</reference>
<reference key="9">
    <citation type="journal article" date="2010" name="J. Mol. Biol.">
        <title>The baseplate wedges of bacteriophage T4 spontaneously assemble into hubless baseplate-like structure in vitro.</title>
        <authorList>
            <person name="Yap M.L."/>
            <person name="Mio K."/>
            <person name="Leiman P.G."/>
            <person name="Kanamaru S."/>
            <person name="Arisaka F."/>
        </authorList>
    </citation>
    <scope>SUBUNIT</scope>
</reference>
<reference key="10">
    <citation type="journal article" date="2004" name="Cell">
        <title>Three-dimensional rearrangement of proteins in the tail of bacteriophage T4 on infection of its host.</title>
        <authorList>
            <person name="Leiman P.G."/>
            <person name="Chipman P.R."/>
            <person name="Kostyuchenko V.A."/>
            <person name="Mesyanzhinov V.V."/>
            <person name="Rossmann M.G."/>
        </authorList>
    </citation>
    <scope>STRUCTURE BY ELECTRON MICROSCOPY (17.0 ANGSTROMS) OF THE CONTRACTED TAIL</scope>
    <scope>SUBCELLULAR LOCATION</scope>
    <scope>FUNCTION</scope>
</reference>
<reference key="11">
    <citation type="journal article" date="2016" name="Nature">
        <title>Structure of the T4 baseplate and its function in triggering sheath contraction.</title>
        <authorList>
            <person name="Taylor N.M."/>
            <person name="Prokhorov N.S."/>
            <person name="Guerrero-Ferreira R.C."/>
            <person name="Shneider M.M."/>
            <person name="Browning C."/>
            <person name="Goldie K.N."/>
            <person name="Stahlberg H."/>
            <person name="Leiman P.G."/>
        </authorList>
    </citation>
    <scope>STRUCTURE BY ELECTRON MICROSCOPY (4.11 ANGSTROMS)</scope>
    <scope>SUBUNIT</scope>
    <scope>SUBCELLULAR LOCATION</scope>
    <scope>FUNCTION</scope>
</reference>
<sequence length="132" mass="15095">MANINKLYSDIDPEMKMDWNKDVSRSLGLRSIKNSLLGIITTRKGSRPFDPEFGCDLSDQLFENMTPLTADTVERNIESAVRNYEPRIDKLAVNVIPVYDDYTLIVEIRFSVIDNPDDIEQIKLQLASSNRV</sequence>